<dbReference type="EC" id="2.4.1.21" evidence="1"/>
<dbReference type="EMBL" id="CP001013">
    <property type="protein sequence ID" value="ACB34157.1"/>
    <property type="molecule type" value="Genomic_DNA"/>
</dbReference>
<dbReference type="RefSeq" id="WP_012346918.1">
    <property type="nucleotide sequence ID" value="NC_010524.1"/>
</dbReference>
<dbReference type="SMR" id="B1Y0P9"/>
<dbReference type="STRING" id="395495.Lcho_1890"/>
<dbReference type="CAZy" id="GT5">
    <property type="family name" value="Glycosyltransferase Family 5"/>
</dbReference>
<dbReference type="KEGG" id="lch:Lcho_1890"/>
<dbReference type="eggNOG" id="COG0297">
    <property type="taxonomic scope" value="Bacteria"/>
</dbReference>
<dbReference type="HOGENOM" id="CLU_009583_18_4_4"/>
<dbReference type="OrthoDB" id="9808590at2"/>
<dbReference type="UniPathway" id="UPA00164"/>
<dbReference type="Proteomes" id="UP000001693">
    <property type="component" value="Chromosome"/>
</dbReference>
<dbReference type="GO" id="GO:0005829">
    <property type="term" value="C:cytosol"/>
    <property type="evidence" value="ECO:0007669"/>
    <property type="project" value="TreeGrafter"/>
</dbReference>
<dbReference type="GO" id="GO:0009011">
    <property type="term" value="F:alpha-1,4-glucan glucosyltransferase (ADP-glucose donor) activity"/>
    <property type="evidence" value="ECO:0007669"/>
    <property type="project" value="UniProtKB-UniRule"/>
</dbReference>
<dbReference type="GO" id="GO:0004373">
    <property type="term" value="F:alpha-1,4-glucan glucosyltransferase (UDP-glucose donor) activity"/>
    <property type="evidence" value="ECO:0007669"/>
    <property type="project" value="InterPro"/>
</dbReference>
<dbReference type="GO" id="GO:0005978">
    <property type="term" value="P:glycogen biosynthetic process"/>
    <property type="evidence" value="ECO:0007669"/>
    <property type="project" value="UniProtKB-UniRule"/>
</dbReference>
<dbReference type="CDD" id="cd03791">
    <property type="entry name" value="GT5_Glycogen_synthase_DULL1-like"/>
    <property type="match status" value="1"/>
</dbReference>
<dbReference type="Gene3D" id="3.40.50.2000">
    <property type="entry name" value="Glycogen Phosphorylase B"/>
    <property type="match status" value="2"/>
</dbReference>
<dbReference type="HAMAP" id="MF_00484">
    <property type="entry name" value="Glycogen_synth"/>
    <property type="match status" value="1"/>
</dbReference>
<dbReference type="InterPro" id="IPR001296">
    <property type="entry name" value="Glyco_trans_1"/>
</dbReference>
<dbReference type="InterPro" id="IPR011835">
    <property type="entry name" value="GS/SS"/>
</dbReference>
<dbReference type="InterPro" id="IPR013534">
    <property type="entry name" value="Starch_synth_cat_dom"/>
</dbReference>
<dbReference type="NCBIfam" id="TIGR02095">
    <property type="entry name" value="glgA"/>
    <property type="match status" value="1"/>
</dbReference>
<dbReference type="NCBIfam" id="NF001899">
    <property type="entry name" value="PRK00654.1-2"/>
    <property type="match status" value="1"/>
</dbReference>
<dbReference type="PANTHER" id="PTHR45825:SF11">
    <property type="entry name" value="ALPHA AMYLASE DOMAIN-CONTAINING PROTEIN"/>
    <property type="match status" value="1"/>
</dbReference>
<dbReference type="PANTHER" id="PTHR45825">
    <property type="entry name" value="GRANULE-BOUND STARCH SYNTHASE 1, CHLOROPLASTIC/AMYLOPLASTIC"/>
    <property type="match status" value="1"/>
</dbReference>
<dbReference type="Pfam" id="PF08323">
    <property type="entry name" value="Glyco_transf_5"/>
    <property type="match status" value="1"/>
</dbReference>
<dbReference type="Pfam" id="PF00534">
    <property type="entry name" value="Glycos_transf_1"/>
    <property type="match status" value="1"/>
</dbReference>
<dbReference type="SUPFAM" id="SSF53756">
    <property type="entry name" value="UDP-Glycosyltransferase/glycogen phosphorylase"/>
    <property type="match status" value="1"/>
</dbReference>
<organism>
    <name type="scientific">Leptothrix cholodnii (strain ATCC 51168 / LMG 8142 / SP-6)</name>
    <name type="common">Leptothrix discophora (strain SP-6)</name>
    <dbReference type="NCBI Taxonomy" id="395495"/>
    <lineage>
        <taxon>Bacteria</taxon>
        <taxon>Pseudomonadati</taxon>
        <taxon>Pseudomonadota</taxon>
        <taxon>Betaproteobacteria</taxon>
        <taxon>Burkholderiales</taxon>
        <taxon>Sphaerotilaceae</taxon>
        <taxon>Leptothrix</taxon>
    </lineage>
</organism>
<evidence type="ECO:0000255" key="1">
    <source>
        <dbReference type="HAMAP-Rule" id="MF_00484"/>
    </source>
</evidence>
<accession>B1Y0P9</accession>
<sequence length="487" mass="53120">MRILQACAEIFPLLKTGGLADVAGALPPALRALGAEVRVVVPGFPAILAGLVDAIEVARLEPPPAMVMARGARLLYGRLPACDVDAYVINSPDHYHRDGGPYNDARQHPYDDNHLRFGLLGWVAAKLADGLDPYWAPRVVHAHDWHAALAPAYLRALEWARGRRLAGSVYTVHNLAYQGFFPAHHFGDLGLPAAYNQVHGLEFYGQISFMKGGLYFADRITTVSPTYAREIQGAEQGCGLDGLLRDRDADLSGILNGVDDAVWNPAGDALIPATYTRRKLTGKAQCKATLQAELGLAEDPAVPLLCVVSRLTEQKGLHLVLQALPALIERGFQFALLGSGDAGMENEFRRLAEQHPTAAAVRLGYDEAFAHRLIAGSDLILVPSRFEPCGLTQLYGLKYGTLPVVRRVGGLVDTVADARLETLDHDATGFVFDDFSADGLIGACLRAKALFRRRADWLQVQRRGMQQPFGWEDSARQYLKLYQQVAA</sequence>
<gene>
    <name evidence="1" type="primary">glgA</name>
    <name type="ordered locus">Lcho_1890</name>
</gene>
<name>GLGA_LEPCP</name>
<proteinExistence type="inferred from homology"/>
<keyword id="KW-0320">Glycogen biosynthesis</keyword>
<keyword id="KW-0328">Glycosyltransferase</keyword>
<keyword id="KW-1185">Reference proteome</keyword>
<keyword id="KW-0808">Transferase</keyword>
<reference key="1">
    <citation type="submission" date="2008-03" db="EMBL/GenBank/DDBJ databases">
        <title>Complete sequence of Leptothrix cholodnii SP-6.</title>
        <authorList>
            <consortium name="US DOE Joint Genome Institute"/>
            <person name="Copeland A."/>
            <person name="Lucas S."/>
            <person name="Lapidus A."/>
            <person name="Glavina del Rio T."/>
            <person name="Dalin E."/>
            <person name="Tice H."/>
            <person name="Bruce D."/>
            <person name="Goodwin L."/>
            <person name="Pitluck S."/>
            <person name="Chertkov O."/>
            <person name="Brettin T."/>
            <person name="Detter J.C."/>
            <person name="Han C."/>
            <person name="Kuske C.R."/>
            <person name="Schmutz J."/>
            <person name="Larimer F."/>
            <person name="Land M."/>
            <person name="Hauser L."/>
            <person name="Kyrpides N."/>
            <person name="Lykidis A."/>
            <person name="Emerson D."/>
            <person name="Richardson P."/>
        </authorList>
    </citation>
    <scope>NUCLEOTIDE SEQUENCE [LARGE SCALE GENOMIC DNA]</scope>
    <source>
        <strain>ATCC 51168 / LMG 8142 / SP-6</strain>
    </source>
</reference>
<comment type="function">
    <text evidence="1">Synthesizes alpha-1,4-glucan chains using ADP-glucose.</text>
</comment>
<comment type="catalytic activity">
    <reaction evidence="1">
        <text>[(1-&gt;4)-alpha-D-glucosyl](n) + ADP-alpha-D-glucose = [(1-&gt;4)-alpha-D-glucosyl](n+1) + ADP + H(+)</text>
        <dbReference type="Rhea" id="RHEA:18189"/>
        <dbReference type="Rhea" id="RHEA-COMP:9584"/>
        <dbReference type="Rhea" id="RHEA-COMP:9587"/>
        <dbReference type="ChEBI" id="CHEBI:15378"/>
        <dbReference type="ChEBI" id="CHEBI:15444"/>
        <dbReference type="ChEBI" id="CHEBI:57498"/>
        <dbReference type="ChEBI" id="CHEBI:456216"/>
        <dbReference type="EC" id="2.4.1.21"/>
    </reaction>
</comment>
<comment type="pathway">
    <text evidence="1">Glycan biosynthesis; glycogen biosynthesis.</text>
</comment>
<comment type="similarity">
    <text evidence="1">Belongs to the glycosyltransferase 1 family. Bacterial/plant glycogen synthase subfamily.</text>
</comment>
<feature type="chain" id="PRO_1000126085" description="Glycogen synthase">
    <location>
        <begin position="1"/>
        <end position="487"/>
    </location>
</feature>
<feature type="binding site" evidence="1">
    <location>
        <position position="15"/>
    </location>
    <ligand>
        <name>ADP-alpha-D-glucose</name>
        <dbReference type="ChEBI" id="CHEBI:57498"/>
    </ligand>
</feature>
<protein>
    <recommendedName>
        <fullName evidence="1">Glycogen synthase</fullName>
        <ecNumber evidence="1">2.4.1.21</ecNumber>
    </recommendedName>
    <alternativeName>
        <fullName evidence="1">Starch [bacterial glycogen] synthase</fullName>
    </alternativeName>
</protein>